<proteinExistence type="inferred from homology"/>
<gene>
    <name evidence="1" type="primary">ttcA</name>
    <name type="ordered locus">NMA1465</name>
</gene>
<accession>A1IS67</accession>
<keyword id="KW-0004">4Fe-4S</keyword>
<keyword id="KW-0067">ATP-binding</keyword>
<keyword id="KW-0963">Cytoplasm</keyword>
<keyword id="KW-0408">Iron</keyword>
<keyword id="KW-0411">Iron-sulfur</keyword>
<keyword id="KW-0460">Magnesium</keyword>
<keyword id="KW-0479">Metal-binding</keyword>
<keyword id="KW-0547">Nucleotide-binding</keyword>
<keyword id="KW-0694">RNA-binding</keyword>
<keyword id="KW-0808">Transferase</keyword>
<keyword id="KW-0819">tRNA processing</keyword>
<keyword id="KW-0820">tRNA-binding</keyword>
<sequence length="319" mass="35877">MSKKIKQELENNKLSKRLRHAVGDAINDFNMIEPGDKIMVCLSGGKDSYALLDILRRLQASAPIDFQLVAVNLDQKQPGFPEEVLPTYLESIGVPYKIVEEDTYSTVKRVLDEGKTTCSLCSRLRRGILYRTAKELGCTKIALGHHRDDILATLFLNMFYGGKLKAMPPKLVSDNGEHIVIRPLAYVKEKDLIKYAELKQFPIIPCNLCGSQPNLQRQVIGDMLRDWDKRFPGRIESMFSALQNVVPSHLADTELFDFVGLERGQSLKHGGDLAFDSEKMPERFSDGSEEDESEIKIEPQKAERKVINILANKPKACGA</sequence>
<feature type="chain" id="PRO_0000348772" description="tRNA-cytidine(32) 2-sulfurtransferase">
    <location>
        <begin position="1"/>
        <end position="319"/>
    </location>
</feature>
<feature type="short sequence motif" description="PP-loop motif" evidence="1">
    <location>
        <begin position="43"/>
        <end position="48"/>
    </location>
</feature>
<feature type="binding site" evidence="1">
    <location>
        <position position="118"/>
    </location>
    <ligand>
        <name>[4Fe-4S] cluster</name>
        <dbReference type="ChEBI" id="CHEBI:49883"/>
    </ligand>
</feature>
<feature type="binding site" evidence="1">
    <location>
        <position position="121"/>
    </location>
    <ligand>
        <name>[4Fe-4S] cluster</name>
        <dbReference type="ChEBI" id="CHEBI:49883"/>
    </ligand>
</feature>
<feature type="binding site" evidence="1">
    <location>
        <position position="209"/>
    </location>
    <ligand>
        <name>[4Fe-4S] cluster</name>
        <dbReference type="ChEBI" id="CHEBI:49883"/>
    </ligand>
</feature>
<reference key="1">
    <citation type="journal article" date="2000" name="Nature">
        <title>Complete DNA sequence of a serogroup A strain of Neisseria meningitidis Z2491.</title>
        <authorList>
            <person name="Parkhill J."/>
            <person name="Achtman M."/>
            <person name="James K.D."/>
            <person name="Bentley S.D."/>
            <person name="Churcher C.M."/>
            <person name="Klee S.R."/>
            <person name="Morelli G."/>
            <person name="Basham D."/>
            <person name="Brown D."/>
            <person name="Chillingworth T."/>
            <person name="Davies R.M."/>
            <person name="Davis P."/>
            <person name="Devlin K."/>
            <person name="Feltwell T."/>
            <person name="Hamlin N."/>
            <person name="Holroyd S."/>
            <person name="Jagels K."/>
            <person name="Leather S."/>
            <person name="Moule S."/>
            <person name="Mungall K.L."/>
            <person name="Quail M.A."/>
            <person name="Rajandream M.A."/>
            <person name="Rutherford K.M."/>
            <person name="Simmonds M."/>
            <person name="Skelton J."/>
            <person name="Whitehead S."/>
            <person name="Spratt B.G."/>
            <person name="Barrell B.G."/>
        </authorList>
    </citation>
    <scope>NUCLEOTIDE SEQUENCE [LARGE SCALE GENOMIC DNA]</scope>
    <source>
        <strain>DSM 15465 / Z2491</strain>
    </source>
</reference>
<comment type="function">
    <text evidence="1">Catalyzes the ATP-dependent 2-thiolation of cytidine in position 32 of tRNA, to form 2-thiocytidine (s(2)C32). The sulfur atoms are provided by the cysteine/cysteine desulfurase (IscS) system.</text>
</comment>
<comment type="catalytic activity">
    <reaction evidence="1">
        <text>cytidine(32) in tRNA + S-sulfanyl-L-cysteinyl-[cysteine desulfurase] + AH2 + ATP = 2-thiocytidine(32) in tRNA + L-cysteinyl-[cysteine desulfurase] + A + AMP + diphosphate + H(+)</text>
        <dbReference type="Rhea" id="RHEA:57048"/>
        <dbReference type="Rhea" id="RHEA-COMP:10288"/>
        <dbReference type="Rhea" id="RHEA-COMP:12157"/>
        <dbReference type="Rhea" id="RHEA-COMP:12158"/>
        <dbReference type="Rhea" id="RHEA-COMP:14821"/>
        <dbReference type="ChEBI" id="CHEBI:13193"/>
        <dbReference type="ChEBI" id="CHEBI:15378"/>
        <dbReference type="ChEBI" id="CHEBI:17499"/>
        <dbReference type="ChEBI" id="CHEBI:29950"/>
        <dbReference type="ChEBI" id="CHEBI:30616"/>
        <dbReference type="ChEBI" id="CHEBI:33019"/>
        <dbReference type="ChEBI" id="CHEBI:61963"/>
        <dbReference type="ChEBI" id="CHEBI:82748"/>
        <dbReference type="ChEBI" id="CHEBI:141453"/>
        <dbReference type="ChEBI" id="CHEBI:456215"/>
    </reaction>
    <physiologicalReaction direction="left-to-right" evidence="1">
        <dbReference type="Rhea" id="RHEA:57049"/>
    </physiologicalReaction>
</comment>
<comment type="cofactor">
    <cofactor evidence="1">
        <name>Mg(2+)</name>
        <dbReference type="ChEBI" id="CHEBI:18420"/>
    </cofactor>
</comment>
<comment type="cofactor">
    <cofactor evidence="1">
        <name>[4Fe-4S] cluster</name>
        <dbReference type="ChEBI" id="CHEBI:49883"/>
    </cofactor>
    <text evidence="1">Binds 1 [4Fe-4S] cluster per subunit. The cluster is chelated by three Cys residues, the fourth Fe has a free coordination site that may bind a sulfur atom transferred from the persulfide of IscS.</text>
</comment>
<comment type="pathway">
    <text evidence="1">tRNA modification.</text>
</comment>
<comment type="subunit">
    <text evidence="1">Homodimer.</text>
</comment>
<comment type="subcellular location">
    <subcellularLocation>
        <location evidence="1">Cytoplasm</location>
    </subcellularLocation>
</comment>
<comment type="miscellaneous">
    <text evidence="1">The thiolation reaction likely consists of two steps: a first activation step by ATP to form an adenylated intermediate of the target base of tRNA, and a second nucleophilic substitution step of the sulfur (S) atom supplied by the hydrosulfide attached to the Fe-S cluster.</text>
</comment>
<comment type="similarity">
    <text evidence="1">Belongs to the TtcA family.</text>
</comment>
<dbReference type="EC" id="2.8.1.-" evidence="1"/>
<dbReference type="EMBL" id="AL157959">
    <property type="protein sequence ID" value="CAM08621.1"/>
    <property type="molecule type" value="Genomic_DNA"/>
</dbReference>
<dbReference type="PIR" id="E81837">
    <property type="entry name" value="E81837"/>
</dbReference>
<dbReference type="RefSeq" id="WP_002246943.1">
    <property type="nucleotide sequence ID" value="NC_003116.1"/>
</dbReference>
<dbReference type="SMR" id="A1IS67"/>
<dbReference type="EnsemblBacteria" id="CAM08621">
    <property type="protein sequence ID" value="CAM08621"/>
    <property type="gene ID" value="NMA1465"/>
</dbReference>
<dbReference type="GeneID" id="93385943"/>
<dbReference type="KEGG" id="nma:NMA1465"/>
<dbReference type="HOGENOM" id="CLU_026481_0_0_4"/>
<dbReference type="Proteomes" id="UP000000626">
    <property type="component" value="Chromosome"/>
</dbReference>
<dbReference type="GO" id="GO:0005737">
    <property type="term" value="C:cytoplasm"/>
    <property type="evidence" value="ECO:0007669"/>
    <property type="project" value="UniProtKB-SubCell"/>
</dbReference>
<dbReference type="GO" id="GO:0051539">
    <property type="term" value="F:4 iron, 4 sulfur cluster binding"/>
    <property type="evidence" value="ECO:0007669"/>
    <property type="project" value="UniProtKB-UniRule"/>
</dbReference>
<dbReference type="GO" id="GO:0005524">
    <property type="term" value="F:ATP binding"/>
    <property type="evidence" value="ECO:0007669"/>
    <property type="project" value="UniProtKB-UniRule"/>
</dbReference>
<dbReference type="GO" id="GO:0000287">
    <property type="term" value="F:magnesium ion binding"/>
    <property type="evidence" value="ECO:0007669"/>
    <property type="project" value="UniProtKB-UniRule"/>
</dbReference>
<dbReference type="GO" id="GO:0016783">
    <property type="term" value="F:sulfurtransferase activity"/>
    <property type="evidence" value="ECO:0007669"/>
    <property type="project" value="UniProtKB-UniRule"/>
</dbReference>
<dbReference type="GO" id="GO:0000049">
    <property type="term" value="F:tRNA binding"/>
    <property type="evidence" value="ECO:0007669"/>
    <property type="project" value="UniProtKB-KW"/>
</dbReference>
<dbReference type="GO" id="GO:0034227">
    <property type="term" value="P:tRNA thio-modification"/>
    <property type="evidence" value="ECO:0007669"/>
    <property type="project" value="UniProtKB-UniRule"/>
</dbReference>
<dbReference type="CDD" id="cd24138">
    <property type="entry name" value="TtcA-like"/>
    <property type="match status" value="1"/>
</dbReference>
<dbReference type="Gene3D" id="3.40.50.620">
    <property type="entry name" value="HUPs"/>
    <property type="match status" value="1"/>
</dbReference>
<dbReference type="HAMAP" id="MF_01850">
    <property type="entry name" value="TtcA"/>
    <property type="match status" value="1"/>
</dbReference>
<dbReference type="InterPro" id="IPR014729">
    <property type="entry name" value="Rossmann-like_a/b/a_fold"/>
</dbReference>
<dbReference type="InterPro" id="IPR011063">
    <property type="entry name" value="TilS/TtcA_N"/>
</dbReference>
<dbReference type="InterPro" id="IPR012089">
    <property type="entry name" value="tRNA_Cyd_32_2_STrfase"/>
</dbReference>
<dbReference type="InterPro" id="IPR035107">
    <property type="entry name" value="tRNA_thiolation_TtcA_Ctu1"/>
</dbReference>
<dbReference type="NCBIfam" id="NF007972">
    <property type="entry name" value="PRK10696.1"/>
    <property type="match status" value="1"/>
</dbReference>
<dbReference type="PANTHER" id="PTHR43686:SF1">
    <property type="entry name" value="AMINOTRAN_5 DOMAIN-CONTAINING PROTEIN"/>
    <property type="match status" value="1"/>
</dbReference>
<dbReference type="PANTHER" id="PTHR43686">
    <property type="entry name" value="SULFURTRANSFERASE-RELATED"/>
    <property type="match status" value="1"/>
</dbReference>
<dbReference type="Pfam" id="PF01171">
    <property type="entry name" value="ATP_bind_3"/>
    <property type="match status" value="1"/>
</dbReference>
<dbReference type="PIRSF" id="PIRSF004976">
    <property type="entry name" value="ATPase_YdaO"/>
    <property type="match status" value="1"/>
</dbReference>
<dbReference type="SUPFAM" id="SSF52402">
    <property type="entry name" value="Adenine nucleotide alpha hydrolases-like"/>
    <property type="match status" value="1"/>
</dbReference>
<name>TTCA_NEIMA</name>
<protein>
    <recommendedName>
        <fullName evidence="1">tRNA-cytidine(32) 2-sulfurtransferase</fullName>
        <ecNumber evidence="1">2.8.1.-</ecNumber>
    </recommendedName>
    <alternativeName>
        <fullName evidence="1">Two-thiocytidine biosynthesis protein A</fullName>
    </alternativeName>
    <alternativeName>
        <fullName evidence="1">tRNA 2-thiocytidine biosynthesis protein TtcA</fullName>
    </alternativeName>
</protein>
<evidence type="ECO:0000255" key="1">
    <source>
        <dbReference type="HAMAP-Rule" id="MF_01850"/>
    </source>
</evidence>
<organism>
    <name type="scientific">Neisseria meningitidis serogroup A / serotype 4A (strain DSM 15465 / Z2491)</name>
    <dbReference type="NCBI Taxonomy" id="122587"/>
    <lineage>
        <taxon>Bacteria</taxon>
        <taxon>Pseudomonadati</taxon>
        <taxon>Pseudomonadota</taxon>
        <taxon>Betaproteobacteria</taxon>
        <taxon>Neisseriales</taxon>
        <taxon>Neisseriaceae</taxon>
        <taxon>Neisseria</taxon>
    </lineage>
</organism>